<organism>
    <name type="scientific">Sarcophaga peregrina</name>
    <name type="common">Flesh fly</name>
    <name type="synonym">Boettcherisca peregrina</name>
    <dbReference type="NCBI Taxonomy" id="7386"/>
    <lineage>
        <taxon>Eukaryota</taxon>
        <taxon>Metazoa</taxon>
        <taxon>Ecdysozoa</taxon>
        <taxon>Arthropoda</taxon>
        <taxon>Hexapoda</taxon>
        <taxon>Insecta</taxon>
        <taxon>Pterygota</taxon>
        <taxon>Neoptera</taxon>
        <taxon>Endopterygota</taxon>
        <taxon>Diptera</taxon>
        <taxon>Brachycera</taxon>
        <taxon>Muscomorpha</taxon>
        <taxon>Oestroidea</taxon>
        <taxon>Sarcophagidae</taxon>
        <taxon>Sarcophaga</taxon>
        <taxon>Boettcherisca</taxon>
    </lineage>
</organism>
<accession>Q9TWW2</accession>
<sequence length="37" mass="3928">DLHIPPPDNKINWPQLSGGGGGSPKTGYDININAQQK</sequence>
<proteinExistence type="evidence at protein level"/>
<dbReference type="PIR" id="S29113">
    <property type="entry name" value="S29113"/>
</dbReference>
<dbReference type="GO" id="GO:0005576">
    <property type="term" value="C:extracellular region"/>
    <property type="evidence" value="ECO:0000314"/>
    <property type="project" value="UniProtKB"/>
</dbReference>
<dbReference type="GO" id="GO:0050829">
    <property type="term" value="P:defense response to Gram-negative bacterium"/>
    <property type="evidence" value="ECO:0000314"/>
    <property type="project" value="UniProtKB"/>
</dbReference>
<dbReference type="GO" id="GO:0045087">
    <property type="term" value="P:innate immune response"/>
    <property type="evidence" value="ECO:0007669"/>
    <property type="project" value="UniProtKB-KW"/>
</dbReference>
<comment type="function">
    <text evidence="3">Acute phase protein with antibacterial activity against the Gram-negative bacteria E.coli (MIC=6.25 ug/ml) and S.sonnei (MIC=12.5 ug/ml). Lacks antibacterial activity against the Gram-negative bacteria P.vulgaris, P.rettgeri and P.aeruginosa, and against the Gram-positive bacteria B.subtilis, S.aureus, M.luteus, B.megaterium, C.bovis and E.cloacae.</text>
</comment>
<comment type="subcellular location">
    <subcellularLocation>
        <location evidence="3">Secreted</location>
    </subcellularLocation>
</comment>
<comment type="tissue specificity">
    <text evidence="3">Synthesized by the fat body and secreted into the hemolymph.</text>
</comment>
<comment type="induction">
    <text evidence="3">By injury to the body wall of the larva. Expression peaks at 10 hours post-injury and is maintained at this level for at least 3 days.</text>
</comment>
<comment type="miscellaneous">
    <text evidence="3">On the 2D-gel the determined MW is: 8 kDa.</text>
</comment>
<comment type="similarity">
    <text evidence="1">Belongs to the attacin/sarcotoxin-2 family.</text>
</comment>
<name>DIP_SARPE</name>
<feature type="chain" id="PRO_0000365109" description="Diptericin">
    <location>
        <begin position="1"/>
        <end position="37" status="greater than"/>
    </location>
</feature>
<feature type="region of interest" description="Disordered" evidence="2">
    <location>
        <begin position="1"/>
        <end position="37"/>
    </location>
</feature>
<feature type="non-terminal residue" evidence="4">
    <location>
        <position position="37"/>
    </location>
</feature>
<evidence type="ECO:0000255" key="1"/>
<evidence type="ECO:0000256" key="2">
    <source>
        <dbReference type="SAM" id="MobiDB-lite"/>
    </source>
</evidence>
<evidence type="ECO:0000269" key="3">
    <source>
    </source>
</evidence>
<evidence type="ECO:0000303" key="4">
    <source>
    </source>
</evidence>
<evidence type="ECO:0000305" key="5"/>
<keyword id="KW-0044">Antibiotic</keyword>
<keyword id="KW-0929">Antimicrobial</keyword>
<keyword id="KW-0903">Direct protein sequencing</keyword>
<keyword id="KW-0391">Immunity</keyword>
<keyword id="KW-0399">Innate immunity</keyword>
<keyword id="KW-0964">Secreted</keyword>
<reference evidence="5" key="1">
    <citation type="journal article" date="1992" name="Biochem. J.">
        <title>Purification and characterization of a diptericin homologue from Sarcophaga peregrina (flesh fly).</title>
        <authorList>
            <person name="Ishikawa M."/>
            <person name="Kubo T."/>
            <person name="Natori S."/>
        </authorList>
    </citation>
    <scope>PROTEIN SEQUENCE</scope>
    <scope>FUNCTION</scope>
    <scope>SUBCELLULAR LOCATION</scope>
    <scope>TISSUE SPECIFICITY</scope>
    <scope>INDUCTION</scope>
    <source>
        <tissue evidence="3">Larval hemolymph</tissue>
    </source>
</reference>
<protein>
    <recommendedName>
        <fullName evidence="4">Diptericin</fullName>
    </recommendedName>
</protein>